<comment type="function">
    <text evidence="1">Antimicrobial peptide. Has activity against the Gram-positive bacterium S.aureus (MIC=16 uM) and the Gram-negative bacterium E.coli (MIC=64 uM). Has a moderate hemolytic activity (LC(50)=50 uM).</text>
</comment>
<comment type="subcellular location">
    <subcellularLocation>
        <location evidence="1">Secreted</location>
    </subcellularLocation>
    <subcellularLocation>
        <location evidence="3">Target cell membrane</location>
    </subcellularLocation>
</comment>
<comment type="tissue specificity">
    <text evidence="4">Expressed by the skin glands.</text>
</comment>
<comment type="mass spectrometry"/>
<comment type="similarity">
    <text evidence="3">Belongs to the frog skin active peptide (FSAP) family. Temporin subfamily.</text>
</comment>
<feature type="peptide" id="PRO_0000457129" description="Temporin-1CSd" evidence="1">
    <location>
        <begin position="1"/>
        <end position="14"/>
    </location>
</feature>
<feature type="modified residue" description="Leucine amide" evidence="1">
    <location>
        <position position="14"/>
    </location>
</feature>
<evidence type="ECO:0000269" key="1">
    <source>
    </source>
</evidence>
<evidence type="ECO:0000303" key="2">
    <source>
    </source>
</evidence>
<evidence type="ECO:0000305" key="3"/>
<evidence type="ECO:0000305" key="4">
    <source>
    </source>
</evidence>
<sequence>NFLGTLVNLAKKIL</sequence>
<reference key="1">
    <citation type="journal article" date="2007" name="Peptides">
        <title>Peptide defenses of the Cascades frog Rana cascadae: implications for the evolutionary history of frogs of the Amerana species group.</title>
        <authorList>
            <person name="Conlon J.M."/>
            <person name="Al-Dhaheri A."/>
            <person name="Al-Mutawa E."/>
            <person name="Al-Kharrge R."/>
            <person name="Ahmed E."/>
            <person name="Kolodziejek J."/>
            <person name="Nowotny N."/>
            <person name="Nielsen P.F."/>
            <person name="Davidson C."/>
        </authorList>
    </citation>
    <scope>PROTEIN SEQUENCE</scope>
    <scope>SUBCELLULAR LOCATION</scope>
    <scope>FUNCTION</scope>
    <scope>MASS SPECTROMETRY</scope>
    <scope>AMIDATION AT LEU-14</scope>
    <source>
        <tissue>Skin secretion</tissue>
    </source>
</reference>
<organism>
    <name type="scientific">Rana cascadae</name>
    <name type="common">Cascades frog</name>
    <dbReference type="NCBI Taxonomy" id="160497"/>
    <lineage>
        <taxon>Eukaryota</taxon>
        <taxon>Metazoa</taxon>
        <taxon>Chordata</taxon>
        <taxon>Craniata</taxon>
        <taxon>Vertebrata</taxon>
        <taxon>Euteleostomi</taxon>
        <taxon>Amphibia</taxon>
        <taxon>Batrachia</taxon>
        <taxon>Anura</taxon>
        <taxon>Neobatrachia</taxon>
        <taxon>Ranoidea</taxon>
        <taxon>Ranidae</taxon>
        <taxon>Rana</taxon>
        <taxon>Rana</taxon>
    </lineage>
</organism>
<accession>P0DTM3</accession>
<keyword id="KW-0027">Amidation</keyword>
<keyword id="KW-0878">Amphibian defense peptide</keyword>
<keyword id="KW-0044">Antibiotic</keyword>
<keyword id="KW-0929">Antimicrobial</keyword>
<keyword id="KW-0903">Direct protein sequencing</keyword>
<keyword id="KW-0391">Immunity</keyword>
<keyword id="KW-0399">Innate immunity</keyword>
<keyword id="KW-0472">Membrane</keyword>
<keyword id="KW-0964">Secreted</keyword>
<keyword id="KW-1052">Target cell membrane</keyword>
<keyword id="KW-1053">Target membrane</keyword>
<name>TP1D_RANCS</name>
<proteinExistence type="evidence at protein level"/>
<protein>
    <recommendedName>
        <fullName evidence="2">Temporin-1CSd</fullName>
    </recommendedName>
</protein>
<dbReference type="GO" id="GO:0005576">
    <property type="term" value="C:extracellular region"/>
    <property type="evidence" value="ECO:0007669"/>
    <property type="project" value="UniProtKB-SubCell"/>
</dbReference>
<dbReference type="GO" id="GO:0016020">
    <property type="term" value="C:membrane"/>
    <property type="evidence" value="ECO:0007669"/>
    <property type="project" value="UniProtKB-KW"/>
</dbReference>
<dbReference type="GO" id="GO:0044218">
    <property type="term" value="C:other organism cell membrane"/>
    <property type="evidence" value="ECO:0007669"/>
    <property type="project" value="UniProtKB-KW"/>
</dbReference>
<dbReference type="GO" id="GO:0042742">
    <property type="term" value="P:defense response to bacterium"/>
    <property type="evidence" value="ECO:0007669"/>
    <property type="project" value="UniProtKB-KW"/>
</dbReference>
<dbReference type="GO" id="GO:0045087">
    <property type="term" value="P:innate immune response"/>
    <property type="evidence" value="ECO:0007669"/>
    <property type="project" value="UniProtKB-KW"/>
</dbReference>